<feature type="chain" id="PRO_0000297606" description="Zinc transporter ZIP9">
    <location>
        <begin position="1"/>
        <end position="303"/>
    </location>
</feature>
<feature type="transmembrane region" description="Helical" evidence="4">
    <location>
        <begin position="7"/>
        <end position="27"/>
    </location>
</feature>
<feature type="transmembrane region" description="Helical" evidence="4">
    <location>
        <begin position="35"/>
        <end position="55"/>
    </location>
</feature>
<feature type="transmembrane region" description="Helical" evidence="4">
    <location>
        <begin position="102"/>
        <end position="122"/>
    </location>
</feature>
<feature type="transmembrane region" description="Helical" evidence="4">
    <location>
        <begin position="142"/>
        <end position="162"/>
    </location>
</feature>
<feature type="transmembrane region" description="Helical" evidence="4">
    <location>
        <begin position="172"/>
        <end position="192"/>
    </location>
</feature>
<feature type="transmembrane region" description="Helical" evidence="4">
    <location>
        <begin position="206"/>
        <end position="226"/>
    </location>
</feature>
<feature type="transmembrane region" description="Helical" evidence="4">
    <location>
        <begin position="240"/>
        <end position="260"/>
    </location>
</feature>
<feature type="transmembrane region" description="Helical" evidence="4">
    <location>
        <begin position="282"/>
        <end position="302"/>
    </location>
</feature>
<feature type="glycosylation site" description="N-linked (GlcNAc...) asparagine" evidence="4">
    <location>
        <position position="29"/>
    </location>
</feature>
<feature type="glycosylation site" description="N-linked (GlcNAc...) asparagine" evidence="4">
    <location>
        <position position="237"/>
    </location>
</feature>
<keyword id="KW-1003">Cell membrane</keyword>
<keyword id="KW-0963">Cytoplasm</keyword>
<keyword id="KW-0325">Glycoprotein</keyword>
<keyword id="KW-0333">Golgi apparatus</keyword>
<keyword id="KW-0406">Ion transport</keyword>
<keyword id="KW-0472">Membrane</keyword>
<keyword id="KW-0496">Mitochondrion</keyword>
<keyword id="KW-0539">Nucleus</keyword>
<keyword id="KW-1185">Reference proteome</keyword>
<keyword id="KW-0812">Transmembrane</keyword>
<keyword id="KW-1133">Transmembrane helix</keyword>
<keyword id="KW-0813">Transport</keyword>
<keyword id="KW-0862">Zinc</keyword>
<keyword id="KW-0864">Zinc transport</keyword>
<name>S39A9_XENTR</name>
<proteinExistence type="evidence at transcript level"/>
<dbReference type="EMBL" id="BC082518">
    <property type="protein sequence ID" value="AAH82518.1"/>
    <property type="molecule type" value="mRNA"/>
</dbReference>
<dbReference type="RefSeq" id="NP_001008193.1">
    <property type="nucleotide sequence ID" value="NM_001008192.1"/>
</dbReference>
<dbReference type="RefSeq" id="XP_012823729.1">
    <property type="nucleotide sequence ID" value="XM_012968275.3"/>
</dbReference>
<dbReference type="RefSeq" id="XP_012823730.1">
    <property type="nucleotide sequence ID" value="XM_012968276.3"/>
</dbReference>
<dbReference type="SMR" id="Q640S1"/>
<dbReference type="FunCoup" id="Q640S1">
    <property type="interactions" value="2839"/>
</dbReference>
<dbReference type="STRING" id="8364.ENSXETP00000020034"/>
<dbReference type="GlyCosmos" id="Q640S1">
    <property type="glycosylation" value="2 sites, No reported glycans"/>
</dbReference>
<dbReference type="PaxDb" id="8364-ENSXETP00000038810"/>
<dbReference type="DNASU" id="493555"/>
<dbReference type="GeneID" id="493555"/>
<dbReference type="KEGG" id="xtr:493555"/>
<dbReference type="AGR" id="Xenbase:XB-GENE-943772"/>
<dbReference type="CTD" id="55334"/>
<dbReference type="Xenbase" id="XB-GENE-943772">
    <property type="gene designation" value="slc39a9"/>
</dbReference>
<dbReference type="eggNOG" id="KOG3907">
    <property type="taxonomic scope" value="Eukaryota"/>
</dbReference>
<dbReference type="HOGENOM" id="CLU_028824_1_0_1"/>
<dbReference type="InParanoid" id="Q640S1"/>
<dbReference type="OMA" id="DDFPSIC"/>
<dbReference type="OrthoDB" id="19859at2759"/>
<dbReference type="PhylomeDB" id="Q640S1"/>
<dbReference type="TreeFam" id="TF315051"/>
<dbReference type="Proteomes" id="UP000008143">
    <property type="component" value="Chromosome 8"/>
</dbReference>
<dbReference type="Bgee" id="ENSXETG00000017909">
    <property type="expression patterns" value="Expressed in 4-cell stage embryo and 14 other cell types or tissues"/>
</dbReference>
<dbReference type="GO" id="GO:0031966">
    <property type="term" value="C:mitochondrial membrane"/>
    <property type="evidence" value="ECO:0000250"/>
    <property type="project" value="UniProtKB"/>
</dbReference>
<dbReference type="GO" id="GO:0005739">
    <property type="term" value="C:mitochondrion"/>
    <property type="evidence" value="ECO:0000250"/>
    <property type="project" value="UniProtKB"/>
</dbReference>
<dbReference type="GO" id="GO:0005634">
    <property type="term" value="C:nucleus"/>
    <property type="evidence" value="ECO:0000250"/>
    <property type="project" value="UniProtKB"/>
</dbReference>
<dbReference type="GO" id="GO:0048471">
    <property type="term" value="C:perinuclear region of cytoplasm"/>
    <property type="evidence" value="ECO:0000250"/>
    <property type="project" value="UniProtKB"/>
</dbReference>
<dbReference type="GO" id="GO:0005886">
    <property type="term" value="C:plasma membrane"/>
    <property type="evidence" value="ECO:0000250"/>
    <property type="project" value="UniProtKB"/>
</dbReference>
<dbReference type="GO" id="GO:0005802">
    <property type="term" value="C:trans-Golgi network"/>
    <property type="evidence" value="ECO:0000250"/>
    <property type="project" value="UniProtKB"/>
</dbReference>
<dbReference type="GO" id="GO:0005497">
    <property type="term" value="F:androgen binding"/>
    <property type="evidence" value="ECO:0000250"/>
    <property type="project" value="UniProtKB"/>
</dbReference>
<dbReference type="GO" id="GO:0004930">
    <property type="term" value="F:G protein-coupled receptor activity"/>
    <property type="evidence" value="ECO:0000250"/>
    <property type="project" value="UniProtKB"/>
</dbReference>
<dbReference type="GO" id="GO:0022883">
    <property type="term" value="F:zinc efflux transmembrane transporter activity"/>
    <property type="evidence" value="ECO:0000250"/>
    <property type="project" value="UniProtKB"/>
</dbReference>
<dbReference type="GO" id="GO:0005385">
    <property type="term" value="F:zinc ion transmembrane transporter activity"/>
    <property type="evidence" value="ECO:0000250"/>
    <property type="project" value="UniProtKB"/>
</dbReference>
<dbReference type="GO" id="GO:0070830">
    <property type="term" value="P:bicellular tight junction assembly"/>
    <property type="evidence" value="ECO:0000250"/>
    <property type="project" value="UniProtKB"/>
</dbReference>
<dbReference type="GO" id="GO:0006882">
    <property type="term" value="P:intracellular zinc ion homeostasis"/>
    <property type="evidence" value="ECO:0000250"/>
    <property type="project" value="UniProtKB"/>
</dbReference>
<dbReference type="GO" id="GO:2000654">
    <property type="term" value="P:regulation of cellular response to testosterone stimulus"/>
    <property type="evidence" value="ECO:0000250"/>
    <property type="project" value="UniProtKB"/>
</dbReference>
<dbReference type="GO" id="GO:1905562">
    <property type="term" value="P:regulation of vascular endothelial cell proliferation"/>
    <property type="evidence" value="ECO:0000250"/>
    <property type="project" value="UniProtKB"/>
</dbReference>
<dbReference type="GO" id="GO:0071577">
    <property type="term" value="P:zinc ion transmembrane transport"/>
    <property type="evidence" value="ECO:0000250"/>
    <property type="project" value="UniProtKB"/>
</dbReference>
<dbReference type="InterPro" id="IPR003689">
    <property type="entry name" value="ZIP"/>
</dbReference>
<dbReference type="InterPro" id="IPR045891">
    <property type="entry name" value="ZIP9"/>
</dbReference>
<dbReference type="PANTHER" id="PTHR16133">
    <property type="entry name" value="SOLUTE CARRIER FAMILY 39 ZINC TRANSPORTER , MEMBER 9-RELATED"/>
    <property type="match status" value="1"/>
</dbReference>
<dbReference type="PANTHER" id="PTHR16133:SF5">
    <property type="entry name" value="ZINC TRANSPORTER ZIP9"/>
    <property type="match status" value="1"/>
</dbReference>
<dbReference type="Pfam" id="PF02535">
    <property type="entry name" value="Zip"/>
    <property type="match status" value="1"/>
</dbReference>
<organism>
    <name type="scientific">Xenopus tropicalis</name>
    <name type="common">Western clawed frog</name>
    <name type="synonym">Silurana tropicalis</name>
    <dbReference type="NCBI Taxonomy" id="8364"/>
    <lineage>
        <taxon>Eukaryota</taxon>
        <taxon>Metazoa</taxon>
        <taxon>Chordata</taxon>
        <taxon>Craniata</taxon>
        <taxon>Vertebrata</taxon>
        <taxon>Euteleostomi</taxon>
        <taxon>Amphibia</taxon>
        <taxon>Batrachia</taxon>
        <taxon>Anura</taxon>
        <taxon>Pipoidea</taxon>
        <taxon>Pipidae</taxon>
        <taxon>Xenopodinae</taxon>
        <taxon>Xenopus</taxon>
        <taxon>Silurana</taxon>
    </lineage>
</organism>
<evidence type="ECO:0000250" key="1">
    <source>
        <dbReference type="UniProtKB" id="Q3KR82"/>
    </source>
</evidence>
<evidence type="ECO:0000250" key="2">
    <source>
        <dbReference type="UniProtKB" id="Q8BFU1"/>
    </source>
</evidence>
<evidence type="ECO:0000250" key="3">
    <source>
        <dbReference type="UniProtKB" id="Q9NUM3"/>
    </source>
</evidence>
<evidence type="ECO:0000255" key="4"/>
<evidence type="ECO:0000305" key="5"/>
<reference key="1">
    <citation type="submission" date="2004-09" db="EMBL/GenBank/DDBJ databases">
        <authorList>
            <consortium name="NIH - Xenopus Gene Collection (XGC) project"/>
        </authorList>
    </citation>
    <scope>NUCLEOTIDE SEQUENCE [LARGE SCALE MRNA]</scope>
    <source>
        <tissue>Embryo</tissue>
    </source>
</reference>
<sequence length="303" mass="31645">MDDFSSISLLSLAMLVGCYVSGIIPLAVNFSEEKLKLVTVLGAGLLCGTALAVIVPEGVHALYEEVLEAKHHDMGDIHKAKDAETGAEISAAHEHDHSNLHAYIGVSLVLGFVFMLLVDQIGSSHMHSADDPEAARAASSKITTTLGLVVHAAADGVALGAAASTSQTSVQLIVFVAIMLHKAPAAFGLVSFLMHAGLERNRIRKHLLVFALAAPVLSMLTYLGLSKSSKEALSEVNATGVAMLFSAGTFLYVATVHVLPEVGGMGHSHKPEVGATKGLSRLEVCALVLGCLIPLVLSIGHQH</sequence>
<gene>
    <name evidence="3" type="primary">slc39a9</name>
    <name type="synonym">zip9</name>
</gene>
<comment type="function">
    <text evidence="1 2 3">Transports zinc ions across cell and organelle membranes into the cytoplasm and regulates intracellular zinc homeostasis. Participates in the zinc ions efflux out of the secretory compartments (By similarity). Also functions as a membrane androgen receptor that mediates, through a G protein, the non-classical androgen signaling pathway, characterized by the activation of MAPK3/MAPK1 (Erk1/2) and transcription factors CREB1 or ATF1 (By similarity). Moreover, has dual functions as a membrane-bound androgen receptor and as an androgen-dependent zinc transporter both of which are mediated through an inhibitory G protein (Gi) that mediates both MAP kinase and zinc signaling leading to the androgen-dependent apoptotic process (By similarity).</text>
</comment>
<comment type="catalytic activity">
    <reaction evidence="3">
        <text>Zn(2+)(in) = Zn(2+)(out)</text>
        <dbReference type="Rhea" id="RHEA:29351"/>
        <dbReference type="ChEBI" id="CHEBI:29105"/>
    </reaction>
</comment>
<comment type="subcellular location">
    <subcellularLocation>
        <location evidence="3">Golgi apparatus</location>
        <location evidence="3">trans-Golgi network membrane</location>
    </subcellularLocation>
    <subcellularLocation>
        <location evidence="3">Cell membrane</location>
        <topology evidence="3">Multi-pass membrane protein</topology>
    </subcellularLocation>
    <subcellularLocation>
        <location evidence="3">Cytoplasm</location>
        <location evidence="3">Perinuclear region</location>
    </subcellularLocation>
    <subcellularLocation>
        <location evidence="3">Mitochondrion</location>
    </subcellularLocation>
    <subcellularLocation>
        <location evidence="3">Nucleus</location>
    </subcellularLocation>
</comment>
<comment type="similarity">
    <text evidence="5">Belongs to the ZIP transporter (TC 2.A.5) family.</text>
</comment>
<protein>
    <recommendedName>
        <fullName evidence="3">Zinc transporter ZIP9</fullName>
    </recommendedName>
    <alternativeName>
        <fullName>Solute carrier family 39 member 9</fullName>
    </alternativeName>
    <alternativeName>
        <fullName>Zrt- and Irt-like protein 9</fullName>
        <shortName>ZIP-9</shortName>
    </alternativeName>
</protein>
<accession>Q640S1</accession>